<name>FOLD_AZOVD</name>
<dbReference type="EC" id="1.5.1.5" evidence="1"/>
<dbReference type="EC" id="3.5.4.9" evidence="1"/>
<dbReference type="EMBL" id="CP001157">
    <property type="protein sequence ID" value="ACO78542.1"/>
    <property type="molecule type" value="Genomic_DNA"/>
</dbReference>
<dbReference type="RefSeq" id="WP_012700940.1">
    <property type="nucleotide sequence ID" value="NC_012560.1"/>
</dbReference>
<dbReference type="SMR" id="C1DHE7"/>
<dbReference type="STRING" id="322710.Avin_23540"/>
<dbReference type="EnsemblBacteria" id="ACO78542">
    <property type="protein sequence ID" value="ACO78542"/>
    <property type="gene ID" value="Avin_23540"/>
</dbReference>
<dbReference type="GeneID" id="88185538"/>
<dbReference type="KEGG" id="avn:Avin_23540"/>
<dbReference type="eggNOG" id="COG0190">
    <property type="taxonomic scope" value="Bacteria"/>
</dbReference>
<dbReference type="HOGENOM" id="CLU_034045_2_1_6"/>
<dbReference type="OrthoDB" id="9803580at2"/>
<dbReference type="UniPathway" id="UPA00193"/>
<dbReference type="Proteomes" id="UP000002424">
    <property type="component" value="Chromosome"/>
</dbReference>
<dbReference type="GO" id="GO:0005829">
    <property type="term" value="C:cytosol"/>
    <property type="evidence" value="ECO:0007669"/>
    <property type="project" value="TreeGrafter"/>
</dbReference>
<dbReference type="GO" id="GO:0004477">
    <property type="term" value="F:methenyltetrahydrofolate cyclohydrolase activity"/>
    <property type="evidence" value="ECO:0007669"/>
    <property type="project" value="UniProtKB-UniRule"/>
</dbReference>
<dbReference type="GO" id="GO:0004488">
    <property type="term" value="F:methylenetetrahydrofolate dehydrogenase (NADP+) activity"/>
    <property type="evidence" value="ECO:0007669"/>
    <property type="project" value="UniProtKB-UniRule"/>
</dbReference>
<dbReference type="GO" id="GO:0000105">
    <property type="term" value="P:L-histidine biosynthetic process"/>
    <property type="evidence" value="ECO:0007669"/>
    <property type="project" value="UniProtKB-KW"/>
</dbReference>
<dbReference type="GO" id="GO:0009086">
    <property type="term" value="P:methionine biosynthetic process"/>
    <property type="evidence" value="ECO:0007669"/>
    <property type="project" value="UniProtKB-KW"/>
</dbReference>
<dbReference type="GO" id="GO:0006164">
    <property type="term" value="P:purine nucleotide biosynthetic process"/>
    <property type="evidence" value="ECO:0007669"/>
    <property type="project" value="UniProtKB-KW"/>
</dbReference>
<dbReference type="GO" id="GO:0035999">
    <property type="term" value="P:tetrahydrofolate interconversion"/>
    <property type="evidence" value="ECO:0007669"/>
    <property type="project" value="UniProtKB-UniRule"/>
</dbReference>
<dbReference type="CDD" id="cd01080">
    <property type="entry name" value="NAD_bind_m-THF_DH_Cyclohyd"/>
    <property type="match status" value="1"/>
</dbReference>
<dbReference type="FunFam" id="3.40.50.10860:FF:000001">
    <property type="entry name" value="Bifunctional protein FolD"/>
    <property type="match status" value="1"/>
</dbReference>
<dbReference type="FunFam" id="3.40.50.720:FF:000006">
    <property type="entry name" value="Bifunctional protein FolD"/>
    <property type="match status" value="1"/>
</dbReference>
<dbReference type="Gene3D" id="3.40.50.10860">
    <property type="entry name" value="Leucine Dehydrogenase, chain A, domain 1"/>
    <property type="match status" value="1"/>
</dbReference>
<dbReference type="Gene3D" id="3.40.50.720">
    <property type="entry name" value="NAD(P)-binding Rossmann-like Domain"/>
    <property type="match status" value="1"/>
</dbReference>
<dbReference type="HAMAP" id="MF_01576">
    <property type="entry name" value="THF_DHG_CYH"/>
    <property type="match status" value="1"/>
</dbReference>
<dbReference type="InterPro" id="IPR046346">
    <property type="entry name" value="Aminoacid_DH-like_N_sf"/>
</dbReference>
<dbReference type="InterPro" id="IPR036291">
    <property type="entry name" value="NAD(P)-bd_dom_sf"/>
</dbReference>
<dbReference type="InterPro" id="IPR000672">
    <property type="entry name" value="THF_DH/CycHdrlase"/>
</dbReference>
<dbReference type="InterPro" id="IPR020630">
    <property type="entry name" value="THF_DH/CycHdrlase_cat_dom"/>
</dbReference>
<dbReference type="InterPro" id="IPR020867">
    <property type="entry name" value="THF_DH/CycHdrlase_CS"/>
</dbReference>
<dbReference type="InterPro" id="IPR020631">
    <property type="entry name" value="THF_DH/CycHdrlase_NAD-bd_dom"/>
</dbReference>
<dbReference type="NCBIfam" id="NF008058">
    <property type="entry name" value="PRK10792.1"/>
    <property type="match status" value="1"/>
</dbReference>
<dbReference type="NCBIfam" id="NF010783">
    <property type="entry name" value="PRK14186.1"/>
    <property type="match status" value="1"/>
</dbReference>
<dbReference type="PANTHER" id="PTHR48099:SF5">
    <property type="entry name" value="C-1-TETRAHYDROFOLATE SYNTHASE, CYTOPLASMIC"/>
    <property type="match status" value="1"/>
</dbReference>
<dbReference type="PANTHER" id="PTHR48099">
    <property type="entry name" value="C-1-TETRAHYDROFOLATE SYNTHASE, CYTOPLASMIC-RELATED"/>
    <property type="match status" value="1"/>
</dbReference>
<dbReference type="Pfam" id="PF00763">
    <property type="entry name" value="THF_DHG_CYH"/>
    <property type="match status" value="1"/>
</dbReference>
<dbReference type="Pfam" id="PF02882">
    <property type="entry name" value="THF_DHG_CYH_C"/>
    <property type="match status" value="1"/>
</dbReference>
<dbReference type="PRINTS" id="PR00085">
    <property type="entry name" value="THFDHDRGNASE"/>
</dbReference>
<dbReference type="SUPFAM" id="SSF53223">
    <property type="entry name" value="Aminoacid dehydrogenase-like, N-terminal domain"/>
    <property type="match status" value="1"/>
</dbReference>
<dbReference type="SUPFAM" id="SSF51735">
    <property type="entry name" value="NAD(P)-binding Rossmann-fold domains"/>
    <property type="match status" value="1"/>
</dbReference>
<dbReference type="PROSITE" id="PS00766">
    <property type="entry name" value="THF_DHG_CYH_1"/>
    <property type="match status" value="1"/>
</dbReference>
<reference key="1">
    <citation type="journal article" date="2009" name="J. Bacteriol.">
        <title>Genome sequence of Azotobacter vinelandii, an obligate aerobe specialized to support diverse anaerobic metabolic processes.</title>
        <authorList>
            <person name="Setubal J.C."/>
            <person name="Dos Santos P."/>
            <person name="Goldman B.S."/>
            <person name="Ertesvaag H."/>
            <person name="Espin G."/>
            <person name="Rubio L.M."/>
            <person name="Valla S."/>
            <person name="Almeida N.F."/>
            <person name="Balasubramanian D."/>
            <person name="Cromes L."/>
            <person name="Curatti L."/>
            <person name="Du Z."/>
            <person name="Godsy E."/>
            <person name="Goodner B."/>
            <person name="Hellner-Burris K."/>
            <person name="Hernandez J.A."/>
            <person name="Houmiel K."/>
            <person name="Imperial J."/>
            <person name="Kennedy C."/>
            <person name="Larson T.J."/>
            <person name="Latreille P."/>
            <person name="Ligon L.S."/>
            <person name="Lu J."/>
            <person name="Maerk M."/>
            <person name="Miller N.M."/>
            <person name="Norton S."/>
            <person name="O'Carroll I.P."/>
            <person name="Paulsen I."/>
            <person name="Raulfs E.C."/>
            <person name="Roemer R."/>
            <person name="Rosser J."/>
            <person name="Segura D."/>
            <person name="Slater S."/>
            <person name="Stricklin S.L."/>
            <person name="Studholme D.J."/>
            <person name="Sun J."/>
            <person name="Viana C.J."/>
            <person name="Wallin E."/>
            <person name="Wang B."/>
            <person name="Wheeler C."/>
            <person name="Zhu H."/>
            <person name="Dean D.R."/>
            <person name="Dixon R."/>
            <person name="Wood D."/>
        </authorList>
    </citation>
    <scope>NUCLEOTIDE SEQUENCE [LARGE SCALE GENOMIC DNA]</scope>
    <source>
        <strain>DJ / ATCC BAA-1303</strain>
    </source>
</reference>
<organism>
    <name type="scientific">Azotobacter vinelandii (strain DJ / ATCC BAA-1303)</name>
    <dbReference type="NCBI Taxonomy" id="322710"/>
    <lineage>
        <taxon>Bacteria</taxon>
        <taxon>Pseudomonadati</taxon>
        <taxon>Pseudomonadota</taxon>
        <taxon>Gammaproteobacteria</taxon>
        <taxon>Pseudomonadales</taxon>
        <taxon>Pseudomonadaceae</taxon>
        <taxon>Azotobacter</taxon>
    </lineage>
</organism>
<sequence>MTAKLIDGKAIAASLRQQIAQCVAERRQQGLRAPGLAVILVGTDPASQVYVSHKRKDCEEVGFHSRAYDLPASTTQGELLSLIDRLNEDSAIDGILVQLPLPVHLDASLLLERIRPDKDVDGFHPYNIGRLAQRMPLLRPCTPKGIMTLLQSTGANLYGLDATVVGASNIVGRPMALELLLAGCTVTVTHRFTRNLAEHVSRADLVIAAAGKPGLVKGEWIKPGAIVIDVGINRLDDGRLVGDVEFSSAAARAEWITPVPGGVGPMTRACLLENTLHAAEQLHR</sequence>
<feature type="chain" id="PRO_1000215588" description="Bifunctional protein FolD">
    <location>
        <begin position="1"/>
        <end position="284"/>
    </location>
</feature>
<feature type="binding site" evidence="1">
    <location>
        <begin position="166"/>
        <end position="168"/>
    </location>
    <ligand>
        <name>NADP(+)</name>
        <dbReference type="ChEBI" id="CHEBI:58349"/>
    </ligand>
</feature>
<feature type="binding site" evidence="1">
    <location>
        <position position="232"/>
    </location>
    <ligand>
        <name>NADP(+)</name>
        <dbReference type="ChEBI" id="CHEBI:58349"/>
    </ligand>
</feature>
<protein>
    <recommendedName>
        <fullName evidence="1">Bifunctional protein FolD</fullName>
    </recommendedName>
    <domain>
        <recommendedName>
            <fullName evidence="1">Methylenetetrahydrofolate dehydrogenase</fullName>
            <ecNumber evidence="1">1.5.1.5</ecNumber>
        </recommendedName>
    </domain>
    <domain>
        <recommendedName>
            <fullName evidence="1">Methenyltetrahydrofolate cyclohydrolase</fullName>
            <ecNumber evidence="1">3.5.4.9</ecNumber>
        </recommendedName>
    </domain>
</protein>
<proteinExistence type="inferred from homology"/>
<gene>
    <name evidence="1" type="primary">folD</name>
    <name type="ordered locus">Avin_23540</name>
</gene>
<evidence type="ECO:0000255" key="1">
    <source>
        <dbReference type="HAMAP-Rule" id="MF_01576"/>
    </source>
</evidence>
<accession>C1DHE7</accession>
<comment type="function">
    <text evidence="1">Catalyzes the oxidation of 5,10-methylenetetrahydrofolate to 5,10-methenyltetrahydrofolate and then the hydrolysis of 5,10-methenyltetrahydrofolate to 10-formyltetrahydrofolate.</text>
</comment>
<comment type="catalytic activity">
    <reaction evidence="1">
        <text>(6R)-5,10-methylene-5,6,7,8-tetrahydrofolate + NADP(+) = (6R)-5,10-methenyltetrahydrofolate + NADPH</text>
        <dbReference type="Rhea" id="RHEA:22812"/>
        <dbReference type="ChEBI" id="CHEBI:15636"/>
        <dbReference type="ChEBI" id="CHEBI:57455"/>
        <dbReference type="ChEBI" id="CHEBI:57783"/>
        <dbReference type="ChEBI" id="CHEBI:58349"/>
        <dbReference type="EC" id="1.5.1.5"/>
    </reaction>
</comment>
<comment type="catalytic activity">
    <reaction evidence="1">
        <text>(6R)-5,10-methenyltetrahydrofolate + H2O = (6R)-10-formyltetrahydrofolate + H(+)</text>
        <dbReference type="Rhea" id="RHEA:23700"/>
        <dbReference type="ChEBI" id="CHEBI:15377"/>
        <dbReference type="ChEBI" id="CHEBI:15378"/>
        <dbReference type="ChEBI" id="CHEBI:57455"/>
        <dbReference type="ChEBI" id="CHEBI:195366"/>
        <dbReference type="EC" id="3.5.4.9"/>
    </reaction>
</comment>
<comment type="pathway">
    <text evidence="1">One-carbon metabolism; tetrahydrofolate interconversion.</text>
</comment>
<comment type="subunit">
    <text evidence="1">Homodimer.</text>
</comment>
<comment type="similarity">
    <text evidence="1">Belongs to the tetrahydrofolate dehydrogenase/cyclohydrolase family.</text>
</comment>
<keyword id="KW-0028">Amino-acid biosynthesis</keyword>
<keyword id="KW-0368">Histidine biosynthesis</keyword>
<keyword id="KW-0378">Hydrolase</keyword>
<keyword id="KW-0486">Methionine biosynthesis</keyword>
<keyword id="KW-0511">Multifunctional enzyme</keyword>
<keyword id="KW-0521">NADP</keyword>
<keyword id="KW-0554">One-carbon metabolism</keyword>
<keyword id="KW-0560">Oxidoreductase</keyword>
<keyword id="KW-0658">Purine biosynthesis</keyword>